<reference key="1">
    <citation type="journal article" date="2005" name="Science">
        <title>The genome sequence of Trypanosoma cruzi, etiologic agent of Chagas disease.</title>
        <authorList>
            <person name="El-Sayed N.M.A."/>
            <person name="Myler P.J."/>
            <person name="Bartholomeu D.C."/>
            <person name="Nilsson D."/>
            <person name="Aggarwal G."/>
            <person name="Tran A.-N."/>
            <person name="Ghedin E."/>
            <person name="Worthey E.A."/>
            <person name="Delcher A.L."/>
            <person name="Blandin G."/>
            <person name="Westenberger S.J."/>
            <person name="Caler E."/>
            <person name="Cerqueira G.C."/>
            <person name="Branche C."/>
            <person name="Haas B."/>
            <person name="Anupama A."/>
            <person name="Arner E."/>
            <person name="Aslund L."/>
            <person name="Attipoe P."/>
            <person name="Bontempi E."/>
            <person name="Bringaud F."/>
            <person name="Burton P."/>
            <person name="Cadag E."/>
            <person name="Campbell D.A."/>
            <person name="Carrington M."/>
            <person name="Crabtree J."/>
            <person name="Darban H."/>
            <person name="da Silveira J.F."/>
            <person name="de Jong P."/>
            <person name="Edwards K."/>
            <person name="Englund P.T."/>
            <person name="Fazelina G."/>
            <person name="Feldblyum T."/>
            <person name="Ferella M."/>
            <person name="Frasch A.C."/>
            <person name="Gull K."/>
            <person name="Horn D."/>
            <person name="Hou L."/>
            <person name="Huang Y."/>
            <person name="Kindlund E."/>
            <person name="Klingbeil M."/>
            <person name="Kluge S."/>
            <person name="Koo H."/>
            <person name="Lacerda D."/>
            <person name="Levin M.J."/>
            <person name="Lorenzi H."/>
            <person name="Louie T."/>
            <person name="Machado C.R."/>
            <person name="McCulloch R."/>
            <person name="McKenna A."/>
            <person name="Mizuno Y."/>
            <person name="Mottram J.C."/>
            <person name="Nelson S."/>
            <person name="Ochaya S."/>
            <person name="Osoegawa K."/>
            <person name="Pai G."/>
            <person name="Parsons M."/>
            <person name="Pentony M."/>
            <person name="Pettersson U."/>
            <person name="Pop M."/>
            <person name="Ramirez J.L."/>
            <person name="Rinta J."/>
            <person name="Robertson L."/>
            <person name="Salzberg S.L."/>
            <person name="Sanchez D.O."/>
            <person name="Seyler A."/>
            <person name="Sharma R."/>
            <person name="Shetty J."/>
            <person name="Simpson A.J."/>
            <person name="Sisk E."/>
            <person name="Tammi M.T."/>
            <person name="Tarleton R."/>
            <person name="Teixeira S."/>
            <person name="Van Aken S."/>
            <person name="Vogt C."/>
            <person name="Ward P.N."/>
            <person name="Wickstead B."/>
            <person name="Wortman J."/>
            <person name="White O."/>
            <person name="Fraser C.M."/>
            <person name="Stuart K.D."/>
            <person name="Andersson B."/>
        </authorList>
    </citation>
    <scope>NUCLEOTIDE SEQUENCE [LARGE SCALE GENOMIC DNA]</scope>
    <source>
        <strain>CL Brener</strain>
    </source>
</reference>
<dbReference type="EC" id="3.1.-.-" evidence="1"/>
<dbReference type="EMBL" id="AAHK01000375">
    <property type="protein sequence ID" value="EAN93107.1"/>
    <property type="molecule type" value="Genomic_DNA"/>
</dbReference>
<dbReference type="RefSeq" id="XP_814958.1">
    <property type="nucleotide sequence ID" value="XM_809865.1"/>
</dbReference>
<dbReference type="SMR" id="Q4DKQ5"/>
<dbReference type="FunCoup" id="Q4DKQ5">
    <property type="interactions" value="902"/>
</dbReference>
<dbReference type="STRING" id="353153.Q4DKQ5"/>
<dbReference type="PaxDb" id="353153-Q4DKQ5"/>
<dbReference type="EnsemblProtists" id="EAN93107">
    <property type="protein sequence ID" value="EAN93107"/>
    <property type="gene ID" value="Tc00.1047053511867.110"/>
</dbReference>
<dbReference type="GeneID" id="3546599"/>
<dbReference type="KEGG" id="tcr:511867.110"/>
<dbReference type="eggNOG" id="KOG2519">
    <property type="taxonomic scope" value="Eukaryota"/>
</dbReference>
<dbReference type="InParanoid" id="Q4DKQ5"/>
<dbReference type="OMA" id="MGIPWVQ"/>
<dbReference type="Proteomes" id="UP000002296">
    <property type="component" value="Unassembled WGS sequence"/>
</dbReference>
<dbReference type="GO" id="GO:0005739">
    <property type="term" value="C:mitochondrion"/>
    <property type="evidence" value="ECO:0007669"/>
    <property type="project" value="UniProtKB-SubCell"/>
</dbReference>
<dbReference type="GO" id="GO:0005730">
    <property type="term" value="C:nucleolus"/>
    <property type="evidence" value="ECO:0007669"/>
    <property type="project" value="UniProtKB-SubCell"/>
</dbReference>
<dbReference type="GO" id="GO:0005654">
    <property type="term" value="C:nucleoplasm"/>
    <property type="evidence" value="ECO:0007669"/>
    <property type="project" value="UniProtKB-SubCell"/>
</dbReference>
<dbReference type="GO" id="GO:0008409">
    <property type="term" value="F:5'-3' exonuclease activity"/>
    <property type="evidence" value="ECO:0007669"/>
    <property type="project" value="UniProtKB-UniRule"/>
</dbReference>
<dbReference type="GO" id="GO:0017108">
    <property type="term" value="F:5'-flap endonuclease activity"/>
    <property type="evidence" value="ECO:0007669"/>
    <property type="project" value="UniProtKB-UniRule"/>
</dbReference>
<dbReference type="GO" id="GO:0003677">
    <property type="term" value="F:DNA binding"/>
    <property type="evidence" value="ECO:0007669"/>
    <property type="project" value="UniProtKB-UniRule"/>
</dbReference>
<dbReference type="GO" id="GO:0000287">
    <property type="term" value="F:magnesium ion binding"/>
    <property type="evidence" value="ECO:0007669"/>
    <property type="project" value="UniProtKB-UniRule"/>
</dbReference>
<dbReference type="GO" id="GO:0006284">
    <property type="term" value="P:base-excision repair"/>
    <property type="evidence" value="ECO:0007669"/>
    <property type="project" value="UniProtKB-UniRule"/>
</dbReference>
<dbReference type="GO" id="GO:0043137">
    <property type="term" value="P:DNA replication, removal of RNA primer"/>
    <property type="evidence" value="ECO:0007669"/>
    <property type="project" value="UniProtKB-UniRule"/>
</dbReference>
<dbReference type="CDD" id="cd09907">
    <property type="entry name" value="H3TH_FEN1-Euk"/>
    <property type="match status" value="1"/>
</dbReference>
<dbReference type="CDD" id="cd09867">
    <property type="entry name" value="PIN_FEN1"/>
    <property type="match status" value="1"/>
</dbReference>
<dbReference type="FunFam" id="1.10.150.20:FF:000009">
    <property type="entry name" value="Flap endonuclease 1"/>
    <property type="match status" value="1"/>
</dbReference>
<dbReference type="FunFam" id="3.40.50.1010:FF:000016">
    <property type="entry name" value="Flap endonuclease 1"/>
    <property type="match status" value="1"/>
</dbReference>
<dbReference type="Gene3D" id="1.10.150.20">
    <property type="entry name" value="5' to 3' exonuclease, C-terminal subdomain"/>
    <property type="match status" value="1"/>
</dbReference>
<dbReference type="Gene3D" id="3.40.50.1010">
    <property type="entry name" value="5'-nuclease"/>
    <property type="match status" value="1"/>
</dbReference>
<dbReference type="HAMAP" id="MF_00614">
    <property type="entry name" value="Fen"/>
    <property type="match status" value="1"/>
</dbReference>
<dbReference type="InterPro" id="IPR036279">
    <property type="entry name" value="5-3_exonuclease_C_sf"/>
</dbReference>
<dbReference type="InterPro" id="IPR023426">
    <property type="entry name" value="Flap_endonuc"/>
</dbReference>
<dbReference type="InterPro" id="IPR008918">
    <property type="entry name" value="HhH2"/>
</dbReference>
<dbReference type="InterPro" id="IPR029060">
    <property type="entry name" value="PIN-like_dom_sf"/>
</dbReference>
<dbReference type="InterPro" id="IPR006086">
    <property type="entry name" value="XPG-I_dom"/>
</dbReference>
<dbReference type="InterPro" id="IPR006084">
    <property type="entry name" value="XPG/Rad2"/>
</dbReference>
<dbReference type="InterPro" id="IPR019974">
    <property type="entry name" value="XPG_CS"/>
</dbReference>
<dbReference type="InterPro" id="IPR006085">
    <property type="entry name" value="XPG_DNA_repair_N"/>
</dbReference>
<dbReference type="PANTHER" id="PTHR11081:SF9">
    <property type="entry name" value="FLAP ENDONUCLEASE 1"/>
    <property type="match status" value="1"/>
</dbReference>
<dbReference type="PANTHER" id="PTHR11081">
    <property type="entry name" value="FLAP ENDONUCLEASE FAMILY MEMBER"/>
    <property type="match status" value="1"/>
</dbReference>
<dbReference type="Pfam" id="PF00867">
    <property type="entry name" value="XPG_I"/>
    <property type="match status" value="1"/>
</dbReference>
<dbReference type="Pfam" id="PF00752">
    <property type="entry name" value="XPG_N"/>
    <property type="match status" value="1"/>
</dbReference>
<dbReference type="PRINTS" id="PR00853">
    <property type="entry name" value="XPGRADSUPER"/>
</dbReference>
<dbReference type="SMART" id="SM00279">
    <property type="entry name" value="HhH2"/>
    <property type="match status" value="1"/>
</dbReference>
<dbReference type="SMART" id="SM00484">
    <property type="entry name" value="XPGI"/>
    <property type="match status" value="1"/>
</dbReference>
<dbReference type="SMART" id="SM00485">
    <property type="entry name" value="XPGN"/>
    <property type="match status" value="1"/>
</dbReference>
<dbReference type="SUPFAM" id="SSF47807">
    <property type="entry name" value="5' to 3' exonuclease, C-terminal subdomain"/>
    <property type="match status" value="1"/>
</dbReference>
<dbReference type="SUPFAM" id="SSF88723">
    <property type="entry name" value="PIN domain-like"/>
    <property type="match status" value="1"/>
</dbReference>
<dbReference type="PROSITE" id="PS00841">
    <property type="entry name" value="XPG_1"/>
    <property type="match status" value="1"/>
</dbReference>
<dbReference type="PROSITE" id="PS00842">
    <property type="entry name" value="XPG_2"/>
    <property type="match status" value="1"/>
</dbReference>
<evidence type="ECO:0000255" key="1">
    <source>
        <dbReference type="HAMAP-Rule" id="MF_03140"/>
    </source>
</evidence>
<protein>
    <recommendedName>
        <fullName evidence="1">Flap endonuclease 1</fullName>
        <shortName evidence="1">FEN-1</shortName>
        <ecNumber evidence="1">3.1.-.-</ecNumber>
    </recommendedName>
    <alternativeName>
        <fullName evidence="1">Flap structure-specific endonuclease 1</fullName>
    </alternativeName>
</protein>
<proteinExistence type="inferred from homology"/>
<sequence length="393" mass="44266">MGILGLSKLLYDRSPAAIRERELKNYFGRRIAIDASMTIYQFIIAMKGFQDGQGMELTNEAGEVTSHLNGLFARTLRMVDEGLRPIYVFDGKPPTLKASELQERRQRAEEAQQLFDTAKEEGNDELMEKMSKRTVRVSREQLEEAKKLLQLMGIPVVQAPSEAEAQCAELVKKKKAWAVATEDMDALTFGAPVMLRHLTYSEAKKRPIAEFHLDEILGITGLTMTQFIDLCILLGCDYVPKIPGIGPQKAWEGIKKHGDIETLLQSLDAGRHSVPEGFHYEEARQFFLKPEVTPAEEIEIQFREPDEEGLVKFLVEEKLFNKDRVLKGIQRLRNALTRKTQGRLDQFFTITRPVTKPNTCDAKAGVKRGHSAIALSGTLQQKGSSGHKKVVKK</sequence>
<name>FEN1_TRYCC</name>
<comment type="function">
    <text evidence="1">Structure-specific nuclease with 5'-flap endonuclease and 5'-3' exonuclease activities involved in DNA replication and repair. During DNA replication, cleaves the 5'-overhanging flap structure that is generated by displacement synthesis when DNA polymerase encounters the 5'-end of a downstream Okazaki fragment. It enters the flap from the 5'-end and then tracks to cleave the flap base, leaving a nick for ligation. Also involved in the long patch base excision repair (LP-BER) pathway, by cleaving within the apurinic/apyrimidinic (AP) site-terminated flap. Acts as a genome stabilization factor that prevents flaps from equilibrating into structures that lead to duplications and deletions. Also possesses 5'-3' exonuclease activity on nicked or gapped double-stranded DNA, and exhibits RNase H activity. Also involved in replication and repair of rDNA and in repairing mitochondrial DNA.</text>
</comment>
<comment type="cofactor">
    <cofactor evidence="1">
        <name>Mg(2+)</name>
        <dbReference type="ChEBI" id="CHEBI:18420"/>
    </cofactor>
    <text evidence="1">Binds 2 magnesium ions per subunit. They probably participate in the reaction catalyzed by the enzyme. May bind an additional third magnesium ion after substrate binding.</text>
</comment>
<comment type="subunit">
    <text evidence="1">Interacts with PCNA. Three molecules of FEN1 bind to one PCNA trimer with each molecule binding to one PCNA monomer. PCNA stimulates the nuclease activity without altering cleavage specificity.</text>
</comment>
<comment type="subcellular location">
    <subcellularLocation>
        <location evidence="1">Nucleus</location>
        <location evidence="1">Nucleolus</location>
    </subcellularLocation>
    <subcellularLocation>
        <location evidence="1">Nucleus</location>
        <location evidence="1">Nucleoplasm</location>
    </subcellularLocation>
    <subcellularLocation>
        <location evidence="1">Mitochondrion</location>
    </subcellularLocation>
    <text evidence="1">Resides mostly in the nucleoli and relocalizes to the nucleoplasm upon DNA damage.</text>
</comment>
<comment type="PTM">
    <text evidence="1">Phosphorylated. Phosphorylation upon DNA damage induces relocalization to the nuclear plasma.</text>
</comment>
<comment type="similarity">
    <text evidence="1">Belongs to the XPG/RAD2 endonuclease family. FEN1 subfamily.</text>
</comment>
<keyword id="KW-0227">DNA damage</keyword>
<keyword id="KW-0234">DNA repair</keyword>
<keyword id="KW-0235">DNA replication</keyword>
<keyword id="KW-0255">Endonuclease</keyword>
<keyword id="KW-0269">Exonuclease</keyword>
<keyword id="KW-0378">Hydrolase</keyword>
<keyword id="KW-0460">Magnesium</keyword>
<keyword id="KW-0479">Metal-binding</keyword>
<keyword id="KW-0496">Mitochondrion</keyword>
<keyword id="KW-0540">Nuclease</keyword>
<keyword id="KW-0539">Nucleus</keyword>
<keyword id="KW-0597">Phosphoprotein</keyword>
<keyword id="KW-1185">Reference proteome</keyword>
<feature type="chain" id="PRO_0000403551" description="Flap endonuclease 1">
    <location>
        <begin position="1"/>
        <end position="393"/>
    </location>
</feature>
<feature type="region of interest" description="N-domain">
    <location>
        <begin position="1"/>
        <end position="108"/>
    </location>
</feature>
<feature type="region of interest" description="I-domain">
    <location>
        <begin position="126"/>
        <end position="257"/>
    </location>
</feature>
<feature type="region of interest" description="Interaction with PCNA" evidence="1">
    <location>
        <begin position="340"/>
        <end position="348"/>
    </location>
</feature>
<feature type="binding site" evidence="1">
    <location>
        <position position="34"/>
    </location>
    <ligand>
        <name>Mg(2+)</name>
        <dbReference type="ChEBI" id="CHEBI:18420"/>
        <label>1</label>
    </ligand>
</feature>
<feature type="binding site" evidence="1">
    <location>
        <position position="74"/>
    </location>
    <ligand>
        <name>DNA</name>
        <dbReference type="ChEBI" id="CHEBI:16991"/>
    </ligand>
</feature>
<feature type="binding site" evidence="1">
    <location>
        <position position="90"/>
    </location>
    <ligand>
        <name>Mg(2+)</name>
        <dbReference type="ChEBI" id="CHEBI:18420"/>
        <label>1</label>
    </ligand>
</feature>
<feature type="binding site" evidence="1">
    <location>
        <position position="162"/>
    </location>
    <ligand>
        <name>DNA</name>
        <dbReference type="ChEBI" id="CHEBI:16991"/>
    </ligand>
</feature>
<feature type="binding site" evidence="1">
    <location>
        <position position="162"/>
    </location>
    <ligand>
        <name>Mg(2+)</name>
        <dbReference type="ChEBI" id="CHEBI:18420"/>
        <label>1</label>
    </ligand>
</feature>
<feature type="binding site" evidence="1">
    <location>
        <position position="164"/>
    </location>
    <ligand>
        <name>Mg(2+)</name>
        <dbReference type="ChEBI" id="CHEBI:18420"/>
        <label>1</label>
    </ligand>
</feature>
<feature type="binding site" evidence="1">
    <location>
        <position position="183"/>
    </location>
    <ligand>
        <name>Mg(2+)</name>
        <dbReference type="ChEBI" id="CHEBI:18420"/>
        <label>2</label>
    </ligand>
</feature>
<feature type="binding site" evidence="1">
    <location>
        <position position="185"/>
    </location>
    <ligand>
        <name>Mg(2+)</name>
        <dbReference type="ChEBI" id="CHEBI:18420"/>
        <label>2</label>
    </ligand>
</feature>
<feature type="binding site" evidence="1">
    <location>
        <position position="235"/>
    </location>
    <ligand>
        <name>DNA</name>
        <dbReference type="ChEBI" id="CHEBI:16991"/>
    </ligand>
</feature>
<feature type="binding site" evidence="1">
    <location>
        <position position="237"/>
    </location>
    <ligand>
        <name>DNA</name>
        <dbReference type="ChEBI" id="CHEBI:16991"/>
    </ligand>
</feature>
<feature type="binding site" evidence="1">
    <location>
        <position position="237"/>
    </location>
    <ligand>
        <name>Mg(2+)</name>
        <dbReference type="ChEBI" id="CHEBI:18420"/>
        <label>2</label>
    </ligand>
</feature>
<accession>Q4DKQ5</accession>
<gene>
    <name evidence="1" type="primary">FEN1</name>
    <name type="ORF">Tc00.1047053511867.110</name>
</gene>
<organism>
    <name type="scientific">Trypanosoma cruzi (strain CL Brener)</name>
    <dbReference type="NCBI Taxonomy" id="353153"/>
    <lineage>
        <taxon>Eukaryota</taxon>
        <taxon>Discoba</taxon>
        <taxon>Euglenozoa</taxon>
        <taxon>Kinetoplastea</taxon>
        <taxon>Metakinetoplastina</taxon>
        <taxon>Trypanosomatida</taxon>
        <taxon>Trypanosomatidae</taxon>
        <taxon>Trypanosoma</taxon>
        <taxon>Schizotrypanum</taxon>
    </lineage>
</organism>